<proteinExistence type="inferred from homology"/>
<sequence length="298" mass="32815">MAVRARDYWDLTKPKVVALIVFTALVGMFLAIPDMPTWLQVRTGALGFLGIWLAASAAAAINQLLDAKIDAQMARTSWRPLVVGKVQPWQVLVFAGALIVISMTILVVWVNVITAVLTFASLIGYAVIYTVYLKRATSQNIVIGGLAGATPPMLGWAAVTGLPTSADWINASLLVLIIFIWTPPHFWALAIFRRADYAKAAIPMLPVTHGVPHTRKQILVYTVLLAIVTLLPVTVGMSGVFYLGGAVVLNAVFLWYAWRMLNPPDELFSMKMFGYSIVYLMALFAFLMVDHLLLPWVR</sequence>
<comment type="function">
    <text evidence="1">Converts heme B (protoheme IX) to heme O by substitution of the vinyl group on carbon 2 of heme B porphyrin ring with a hydroxyethyl farnesyl side group.</text>
</comment>
<comment type="catalytic activity">
    <reaction evidence="1">
        <text>heme b + (2E,6E)-farnesyl diphosphate + H2O = Fe(II)-heme o + diphosphate</text>
        <dbReference type="Rhea" id="RHEA:28070"/>
        <dbReference type="ChEBI" id="CHEBI:15377"/>
        <dbReference type="ChEBI" id="CHEBI:33019"/>
        <dbReference type="ChEBI" id="CHEBI:60344"/>
        <dbReference type="ChEBI" id="CHEBI:60530"/>
        <dbReference type="ChEBI" id="CHEBI:175763"/>
        <dbReference type="EC" id="2.5.1.141"/>
    </reaction>
</comment>
<comment type="pathway">
    <text evidence="1">Porphyrin-containing compound metabolism; heme O biosynthesis; heme O from protoheme: step 1/1.</text>
</comment>
<comment type="subcellular location">
    <subcellularLocation>
        <location evidence="1">Cell inner membrane</location>
        <topology evidence="1">Multi-pass membrane protein</topology>
    </subcellularLocation>
</comment>
<comment type="miscellaneous">
    <text evidence="1">Carbon 2 of the heme B porphyrin ring is defined according to the Fischer nomenclature.</text>
</comment>
<comment type="similarity">
    <text evidence="1">Belongs to the UbiA prenyltransferase family. Protoheme IX farnesyltransferase subfamily.</text>
</comment>
<comment type="sequence caution" evidence="2">
    <conflict type="erroneous initiation">
        <sequence resource="EMBL-CDS" id="AAW77386"/>
    </conflict>
</comment>
<organism>
    <name type="scientific">Xanthomonas oryzae pv. oryzae (strain KACC10331 / KXO85)</name>
    <dbReference type="NCBI Taxonomy" id="291331"/>
    <lineage>
        <taxon>Bacteria</taxon>
        <taxon>Pseudomonadati</taxon>
        <taxon>Pseudomonadota</taxon>
        <taxon>Gammaproteobacteria</taxon>
        <taxon>Lysobacterales</taxon>
        <taxon>Lysobacteraceae</taxon>
        <taxon>Xanthomonas</taxon>
    </lineage>
</organism>
<reference key="1">
    <citation type="journal article" date="2005" name="Nucleic Acids Res.">
        <title>The genome sequence of Xanthomonas oryzae pathovar oryzae KACC10331, the bacterial blight pathogen of rice.</title>
        <authorList>
            <person name="Lee B.-M."/>
            <person name="Park Y.-J."/>
            <person name="Park D.-S."/>
            <person name="Kang H.-W."/>
            <person name="Kim J.-G."/>
            <person name="Song E.-S."/>
            <person name="Park I.-C."/>
            <person name="Yoon U.-H."/>
            <person name="Hahn J.-H."/>
            <person name="Koo B.-S."/>
            <person name="Lee G.-B."/>
            <person name="Kim H."/>
            <person name="Park H.-S."/>
            <person name="Yoon K.-O."/>
            <person name="Kim J.-H."/>
            <person name="Jung C.-H."/>
            <person name="Koh N.-H."/>
            <person name="Seo J.-S."/>
            <person name="Go S.-J."/>
        </authorList>
    </citation>
    <scope>NUCLEOTIDE SEQUENCE [LARGE SCALE GENOMIC DNA]</scope>
    <source>
        <strain>KACC10331 / KXO85</strain>
    </source>
</reference>
<name>CYOE_XANOR</name>
<dbReference type="EC" id="2.5.1.141" evidence="1"/>
<dbReference type="EMBL" id="AE013598">
    <property type="protein sequence ID" value="AAW77386.1"/>
    <property type="status" value="ALT_INIT"/>
    <property type="molecule type" value="Genomic_DNA"/>
</dbReference>
<dbReference type="SMR" id="Q5GV87"/>
<dbReference type="STRING" id="291331.XOO4132"/>
<dbReference type="KEGG" id="xoo:XOO4132"/>
<dbReference type="HOGENOM" id="CLU_029631_0_2_6"/>
<dbReference type="UniPathway" id="UPA00834">
    <property type="reaction ID" value="UER00712"/>
</dbReference>
<dbReference type="Proteomes" id="UP000006735">
    <property type="component" value="Chromosome"/>
</dbReference>
<dbReference type="GO" id="GO:0005886">
    <property type="term" value="C:plasma membrane"/>
    <property type="evidence" value="ECO:0007669"/>
    <property type="project" value="UniProtKB-SubCell"/>
</dbReference>
<dbReference type="GO" id="GO:0008495">
    <property type="term" value="F:protoheme IX farnesyltransferase activity"/>
    <property type="evidence" value="ECO:0007669"/>
    <property type="project" value="UniProtKB-UniRule"/>
</dbReference>
<dbReference type="GO" id="GO:0048034">
    <property type="term" value="P:heme O biosynthetic process"/>
    <property type="evidence" value="ECO:0007669"/>
    <property type="project" value="UniProtKB-UniRule"/>
</dbReference>
<dbReference type="CDD" id="cd13957">
    <property type="entry name" value="PT_UbiA_Cox10"/>
    <property type="match status" value="1"/>
</dbReference>
<dbReference type="FunFam" id="1.10.357.140:FF:000001">
    <property type="entry name" value="Protoheme IX farnesyltransferase"/>
    <property type="match status" value="1"/>
</dbReference>
<dbReference type="Gene3D" id="1.10.357.140">
    <property type="entry name" value="UbiA prenyltransferase"/>
    <property type="match status" value="1"/>
</dbReference>
<dbReference type="HAMAP" id="MF_00154">
    <property type="entry name" value="CyoE_CtaB"/>
    <property type="match status" value="1"/>
</dbReference>
<dbReference type="InterPro" id="IPR006369">
    <property type="entry name" value="Protohaem_IX_farnesylTrfase"/>
</dbReference>
<dbReference type="InterPro" id="IPR000537">
    <property type="entry name" value="UbiA_prenyltransferase"/>
</dbReference>
<dbReference type="InterPro" id="IPR030470">
    <property type="entry name" value="UbiA_prenylTrfase_CS"/>
</dbReference>
<dbReference type="InterPro" id="IPR044878">
    <property type="entry name" value="UbiA_sf"/>
</dbReference>
<dbReference type="NCBIfam" id="TIGR01473">
    <property type="entry name" value="cyoE_ctaB"/>
    <property type="match status" value="1"/>
</dbReference>
<dbReference type="NCBIfam" id="NF003349">
    <property type="entry name" value="PRK04375.1-2"/>
    <property type="match status" value="1"/>
</dbReference>
<dbReference type="PANTHER" id="PTHR43448:SF7">
    <property type="entry name" value="4-HYDROXYBENZOATE SOLANESYLTRANSFERASE"/>
    <property type="match status" value="1"/>
</dbReference>
<dbReference type="PANTHER" id="PTHR43448">
    <property type="entry name" value="PROTOHEME IX FARNESYLTRANSFERASE, MITOCHONDRIAL"/>
    <property type="match status" value="1"/>
</dbReference>
<dbReference type="Pfam" id="PF01040">
    <property type="entry name" value="UbiA"/>
    <property type="match status" value="1"/>
</dbReference>
<dbReference type="PROSITE" id="PS00943">
    <property type="entry name" value="UBIA"/>
    <property type="match status" value="1"/>
</dbReference>
<accession>Q5GV87</accession>
<keyword id="KW-0997">Cell inner membrane</keyword>
<keyword id="KW-1003">Cell membrane</keyword>
<keyword id="KW-0350">Heme biosynthesis</keyword>
<keyword id="KW-0472">Membrane</keyword>
<keyword id="KW-1185">Reference proteome</keyword>
<keyword id="KW-0808">Transferase</keyword>
<keyword id="KW-0812">Transmembrane</keyword>
<keyword id="KW-1133">Transmembrane helix</keyword>
<protein>
    <recommendedName>
        <fullName evidence="1">Protoheme IX farnesyltransferase</fullName>
        <ecNumber evidence="1">2.5.1.141</ecNumber>
    </recommendedName>
    <alternativeName>
        <fullName evidence="1">Heme B farnesyltransferase</fullName>
    </alternativeName>
    <alternativeName>
        <fullName evidence="1">Heme O synthase</fullName>
    </alternativeName>
</protein>
<gene>
    <name evidence="1" type="primary">cyoE</name>
    <name type="ordered locus">XOO4132</name>
</gene>
<feature type="chain" id="PRO_0000326973" description="Protoheme IX farnesyltransferase">
    <location>
        <begin position="1"/>
        <end position="298"/>
    </location>
</feature>
<feature type="transmembrane region" description="Helical" evidence="1">
    <location>
        <begin position="16"/>
        <end position="36"/>
    </location>
</feature>
<feature type="transmembrane region" description="Helical" evidence="1">
    <location>
        <begin position="45"/>
        <end position="65"/>
    </location>
</feature>
<feature type="transmembrane region" description="Helical" evidence="1">
    <location>
        <begin position="93"/>
        <end position="113"/>
    </location>
</feature>
<feature type="transmembrane region" description="Helical" evidence="1">
    <location>
        <begin position="114"/>
        <end position="134"/>
    </location>
</feature>
<feature type="transmembrane region" description="Helical" evidence="1">
    <location>
        <begin position="141"/>
        <end position="161"/>
    </location>
</feature>
<feature type="transmembrane region" description="Helical" evidence="1">
    <location>
        <begin position="172"/>
        <end position="192"/>
    </location>
</feature>
<feature type="transmembrane region" description="Helical" evidence="1">
    <location>
        <begin position="223"/>
        <end position="243"/>
    </location>
</feature>
<feature type="transmembrane region" description="Helical" evidence="1">
    <location>
        <begin position="244"/>
        <end position="264"/>
    </location>
</feature>
<feature type="transmembrane region" description="Helical" evidence="1">
    <location>
        <begin position="277"/>
        <end position="297"/>
    </location>
</feature>
<evidence type="ECO:0000255" key="1">
    <source>
        <dbReference type="HAMAP-Rule" id="MF_00154"/>
    </source>
</evidence>
<evidence type="ECO:0000305" key="2"/>